<feature type="chain" id="PRO_1000201193" description="3-hydroxydecanoyl-[acyl-carrier-protein] dehydratase">
    <location>
        <begin position="1"/>
        <end position="172"/>
    </location>
</feature>
<feature type="active site" evidence="1">
    <location>
        <position position="71"/>
    </location>
</feature>
<keyword id="KW-0963">Cytoplasm</keyword>
<keyword id="KW-0275">Fatty acid biosynthesis</keyword>
<keyword id="KW-0276">Fatty acid metabolism</keyword>
<keyword id="KW-0413">Isomerase</keyword>
<keyword id="KW-0444">Lipid biosynthesis</keyword>
<keyword id="KW-0443">Lipid metabolism</keyword>
<keyword id="KW-0456">Lyase</keyword>
<keyword id="KW-1185">Reference proteome</keyword>
<comment type="function">
    <text evidence="1">Necessary for the introduction of cis unsaturation into fatty acids. Catalyzes the dehydration of (3R)-3-hydroxydecanoyl-ACP to E-(2)-decenoyl-ACP and then its isomerization to Z-(3)-decenoyl-ACP. Can catalyze the dehydratase reaction for beta-hydroxyacyl-ACPs with saturated chain lengths up to 16:0, being most active on intermediate chain length.</text>
</comment>
<comment type="catalytic activity">
    <reaction evidence="1">
        <text>a (3R)-hydroxyacyl-[ACP] = a (2E)-enoyl-[ACP] + H2O</text>
        <dbReference type="Rhea" id="RHEA:13097"/>
        <dbReference type="Rhea" id="RHEA-COMP:9925"/>
        <dbReference type="Rhea" id="RHEA-COMP:9945"/>
        <dbReference type="ChEBI" id="CHEBI:15377"/>
        <dbReference type="ChEBI" id="CHEBI:78784"/>
        <dbReference type="ChEBI" id="CHEBI:78827"/>
        <dbReference type="EC" id="4.2.1.59"/>
    </reaction>
</comment>
<comment type="catalytic activity">
    <reaction evidence="1">
        <text>(3R)-hydroxydecanoyl-[ACP] = (2E)-decenoyl-[ACP] + H2O</text>
        <dbReference type="Rhea" id="RHEA:41860"/>
        <dbReference type="Rhea" id="RHEA-COMP:9638"/>
        <dbReference type="Rhea" id="RHEA-COMP:9639"/>
        <dbReference type="ChEBI" id="CHEBI:15377"/>
        <dbReference type="ChEBI" id="CHEBI:78466"/>
        <dbReference type="ChEBI" id="CHEBI:78467"/>
    </reaction>
</comment>
<comment type="catalytic activity">
    <reaction evidence="1">
        <text>(2E)-decenoyl-[ACP] = (3Z)-decenoyl-[ACP]</text>
        <dbReference type="Rhea" id="RHEA:23568"/>
        <dbReference type="Rhea" id="RHEA-COMP:9639"/>
        <dbReference type="Rhea" id="RHEA-COMP:9927"/>
        <dbReference type="ChEBI" id="CHEBI:78467"/>
        <dbReference type="ChEBI" id="CHEBI:78798"/>
        <dbReference type="EC" id="5.3.3.14"/>
    </reaction>
</comment>
<comment type="pathway">
    <text evidence="1">Lipid metabolism; fatty acid biosynthesis.</text>
</comment>
<comment type="subunit">
    <text evidence="1">Homodimer.</text>
</comment>
<comment type="subcellular location">
    <subcellularLocation>
        <location evidence="1">Cytoplasm</location>
    </subcellularLocation>
</comment>
<comment type="similarity">
    <text evidence="1">Belongs to the thioester dehydratase family. FabA subfamily.</text>
</comment>
<accession>B4EVD3</accession>
<protein>
    <recommendedName>
        <fullName evidence="1">3-hydroxydecanoyl-[acyl-carrier-protein] dehydratase</fullName>
        <ecNumber evidence="1">4.2.1.59</ecNumber>
    </recommendedName>
    <alternativeName>
        <fullName evidence="1">3-hydroxyacyl-[acyl-carrier-protein] dehydratase FabA</fullName>
    </alternativeName>
    <alternativeName>
        <fullName evidence="1">Beta-hydroxydecanoyl thioester dehydrase</fullName>
    </alternativeName>
    <alternativeName>
        <fullName evidence="1">Trans-2-decenoyl-[acyl-carrier-protein] isomerase</fullName>
        <ecNumber evidence="1">5.3.3.14</ecNumber>
    </alternativeName>
</protein>
<dbReference type="EC" id="4.2.1.59" evidence="1"/>
<dbReference type="EC" id="5.3.3.14" evidence="1"/>
<dbReference type="EMBL" id="AM942759">
    <property type="protein sequence ID" value="CAR41788.1"/>
    <property type="molecule type" value="Genomic_DNA"/>
</dbReference>
<dbReference type="RefSeq" id="WP_004244680.1">
    <property type="nucleotide sequence ID" value="NC_010554.1"/>
</dbReference>
<dbReference type="SMR" id="B4EVD3"/>
<dbReference type="EnsemblBacteria" id="CAR41788">
    <property type="protein sequence ID" value="CAR41788"/>
    <property type="gene ID" value="PMI0782"/>
</dbReference>
<dbReference type="GeneID" id="6801021"/>
<dbReference type="KEGG" id="pmr:PMI0782"/>
<dbReference type="eggNOG" id="COG0764">
    <property type="taxonomic scope" value="Bacteria"/>
</dbReference>
<dbReference type="HOGENOM" id="CLU_097925_0_0_6"/>
<dbReference type="UniPathway" id="UPA00094"/>
<dbReference type="Proteomes" id="UP000008319">
    <property type="component" value="Chromosome"/>
</dbReference>
<dbReference type="GO" id="GO:0005737">
    <property type="term" value="C:cytoplasm"/>
    <property type="evidence" value="ECO:0007669"/>
    <property type="project" value="UniProtKB-SubCell"/>
</dbReference>
<dbReference type="GO" id="GO:0019171">
    <property type="term" value="F:(3R)-hydroxyacyl-[acyl-carrier-protein] dehydratase activity"/>
    <property type="evidence" value="ECO:0007669"/>
    <property type="project" value="UniProtKB-UniRule"/>
</dbReference>
<dbReference type="GO" id="GO:0034017">
    <property type="term" value="F:trans-2-decenoyl-acyl-carrier-protein isomerase activity"/>
    <property type="evidence" value="ECO:0007669"/>
    <property type="project" value="UniProtKB-UniRule"/>
</dbReference>
<dbReference type="GO" id="GO:0006636">
    <property type="term" value="P:unsaturated fatty acid biosynthetic process"/>
    <property type="evidence" value="ECO:0007669"/>
    <property type="project" value="UniProtKB-UniRule"/>
</dbReference>
<dbReference type="CDD" id="cd01287">
    <property type="entry name" value="FabA"/>
    <property type="match status" value="1"/>
</dbReference>
<dbReference type="FunFam" id="3.10.129.10:FF:000003">
    <property type="entry name" value="3-hydroxydecanoyl-[acyl-carrier-protein] dehydratase"/>
    <property type="match status" value="1"/>
</dbReference>
<dbReference type="Gene3D" id="3.10.129.10">
    <property type="entry name" value="Hotdog Thioesterase"/>
    <property type="match status" value="1"/>
</dbReference>
<dbReference type="HAMAP" id="MF_00405">
    <property type="entry name" value="FabA"/>
    <property type="match status" value="1"/>
</dbReference>
<dbReference type="InterPro" id="IPR010083">
    <property type="entry name" value="FabA"/>
</dbReference>
<dbReference type="InterPro" id="IPR013114">
    <property type="entry name" value="FabA_FabZ"/>
</dbReference>
<dbReference type="InterPro" id="IPR029069">
    <property type="entry name" value="HotDog_dom_sf"/>
</dbReference>
<dbReference type="NCBIfam" id="TIGR01749">
    <property type="entry name" value="fabA"/>
    <property type="match status" value="1"/>
</dbReference>
<dbReference type="NCBIfam" id="NF003509">
    <property type="entry name" value="PRK05174.1"/>
    <property type="match status" value="1"/>
</dbReference>
<dbReference type="PANTHER" id="PTHR30272">
    <property type="entry name" value="3-HYDROXYACYL-[ACYL-CARRIER-PROTEIN] DEHYDRATASE"/>
    <property type="match status" value="1"/>
</dbReference>
<dbReference type="PANTHER" id="PTHR30272:SF8">
    <property type="entry name" value="3-HYDROXYDECANOYL-[ACYL-CARRIER-PROTEIN] DEHYDRATASE"/>
    <property type="match status" value="1"/>
</dbReference>
<dbReference type="Pfam" id="PF07977">
    <property type="entry name" value="FabA"/>
    <property type="match status" value="1"/>
</dbReference>
<dbReference type="SUPFAM" id="SSF54637">
    <property type="entry name" value="Thioesterase/thiol ester dehydrase-isomerase"/>
    <property type="match status" value="1"/>
</dbReference>
<gene>
    <name evidence="1" type="primary">fabA</name>
    <name type="ordered locus">PMI0782</name>
</gene>
<name>FABA_PROMH</name>
<sequence length="172" mass="19122">MVDKRESYSKEDLIASGRGELFGQDGPPLPSGNMLMMDRIIKMTEDGGSHNKGFIEAEFDIKPDLWFFDCHFVNDPVMPGCLGLDAMWQLVGFYLGWLGGEGKGRALGVGEVKFTGQILPTAKKVTYKIDFKRVINRKLIMGIADGEVYVDGKLIYEAKDLKVGLFKDTSAF</sequence>
<evidence type="ECO:0000255" key="1">
    <source>
        <dbReference type="HAMAP-Rule" id="MF_00405"/>
    </source>
</evidence>
<organism>
    <name type="scientific">Proteus mirabilis (strain HI4320)</name>
    <dbReference type="NCBI Taxonomy" id="529507"/>
    <lineage>
        <taxon>Bacteria</taxon>
        <taxon>Pseudomonadati</taxon>
        <taxon>Pseudomonadota</taxon>
        <taxon>Gammaproteobacteria</taxon>
        <taxon>Enterobacterales</taxon>
        <taxon>Morganellaceae</taxon>
        <taxon>Proteus</taxon>
    </lineage>
</organism>
<proteinExistence type="inferred from homology"/>
<reference key="1">
    <citation type="journal article" date="2008" name="J. Bacteriol.">
        <title>Complete genome sequence of uropathogenic Proteus mirabilis, a master of both adherence and motility.</title>
        <authorList>
            <person name="Pearson M.M."/>
            <person name="Sebaihia M."/>
            <person name="Churcher C."/>
            <person name="Quail M.A."/>
            <person name="Seshasayee A.S."/>
            <person name="Luscombe N.M."/>
            <person name="Abdellah Z."/>
            <person name="Arrosmith C."/>
            <person name="Atkin B."/>
            <person name="Chillingworth T."/>
            <person name="Hauser H."/>
            <person name="Jagels K."/>
            <person name="Moule S."/>
            <person name="Mungall K."/>
            <person name="Norbertczak H."/>
            <person name="Rabbinowitsch E."/>
            <person name="Walker D."/>
            <person name="Whithead S."/>
            <person name="Thomson N.R."/>
            <person name="Rather P.N."/>
            <person name="Parkhill J."/>
            <person name="Mobley H.L.T."/>
        </authorList>
    </citation>
    <scope>NUCLEOTIDE SEQUENCE [LARGE SCALE GENOMIC DNA]</scope>
    <source>
        <strain>HI4320</strain>
    </source>
</reference>